<feature type="chain" id="PRO_1000056631" description="Ribosomal RNA small subunit methyltransferase A">
    <location>
        <begin position="1"/>
        <end position="256"/>
    </location>
</feature>
<feature type="binding site" evidence="1">
    <location>
        <position position="12"/>
    </location>
    <ligand>
        <name>S-adenosyl-L-methionine</name>
        <dbReference type="ChEBI" id="CHEBI:59789"/>
    </ligand>
</feature>
<feature type="binding site" evidence="1">
    <location>
        <position position="14"/>
    </location>
    <ligand>
        <name>S-adenosyl-L-methionine</name>
        <dbReference type="ChEBI" id="CHEBI:59789"/>
    </ligand>
</feature>
<feature type="binding site" evidence="1">
    <location>
        <position position="39"/>
    </location>
    <ligand>
        <name>S-adenosyl-L-methionine</name>
        <dbReference type="ChEBI" id="CHEBI:59789"/>
    </ligand>
</feature>
<feature type="binding site" evidence="1">
    <location>
        <position position="60"/>
    </location>
    <ligand>
        <name>S-adenosyl-L-methionine</name>
        <dbReference type="ChEBI" id="CHEBI:59789"/>
    </ligand>
</feature>
<feature type="binding site" evidence="1">
    <location>
        <position position="85"/>
    </location>
    <ligand>
        <name>S-adenosyl-L-methionine</name>
        <dbReference type="ChEBI" id="CHEBI:59789"/>
    </ligand>
</feature>
<feature type="binding site" evidence="1">
    <location>
        <position position="103"/>
    </location>
    <ligand>
        <name>S-adenosyl-L-methionine</name>
        <dbReference type="ChEBI" id="CHEBI:59789"/>
    </ligand>
</feature>
<name>RSMA_LEGPC</name>
<keyword id="KW-0963">Cytoplasm</keyword>
<keyword id="KW-0489">Methyltransferase</keyword>
<keyword id="KW-0694">RNA-binding</keyword>
<keyword id="KW-0698">rRNA processing</keyword>
<keyword id="KW-0949">S-adenosyl-L-methionine</keyword>
<keyword id="KW-0808">Transferase</keyword>
<dbReference type="EC" id="2.1.1.182" evidence="1"/>
<dbReference type="EMBL" id="CP000675">
    <property type="protein sequence ID" value="ABQ57120.1"/>
    <property type="molecule type" value="Genomic_DNA"/>
</dbReference>
<dbReference type="RefSeq" id="WP_011947822.1">
    <property type="nucleotide sequence ID" value="NZ_JAPMSS010000004.1"/>
</dbReference>
<dbReference type="SMR" id="A5IIC0"/>
<dbReference type="KEGG" id="lpc:LPC_3233"/>
<dbReference type="HOGENOM" id="CLU_041220_0_1_6"/>
<dbReference type="GO" id="GO:0005829">
    <property type="term" value="C:cytosol"/>
    <property type="evidence" value="ECO:0007669"/>
    <property type="project" value="TreeGrafter"/>
</dbReference>
<dbReference type="GO" id="GO:0052908">
    <property type="term" value="F:16S rRNA (adenine(1518)-N(6)/adenine(1519)-N(6))-dimethyltransferase activity"/>
    <property type="evidence" value="ECO:0007669"/>
    <property type="project" value="UniProtKB-EC"/>
</dbReference>
<dbReference type="GO" id="GO:0003723">
    <property type="term" value="F:RNA binding"/>
    <property type="evidence" value="ECO:0007669"/>
    <property type="project" value="UniProtKB-KW"/>
</dbReference>
<dbReference type="FunFam" id="1.10.8.100:FF:000001">
    <property type="entry name" value="Ribosomal RNA small subunit methyltransferase A"/>
    <property type="match status" value="1"/>
</dbReference>
<dbReference type="Gene3D" id="1.10.8.100">
    <property type="entry name" value="Ribosomal RNA adenine dimethylase-like, domain 2"/>
    <property type="match status" value="1"/>
</dbReference>
<dbReference type="Gene3D" id="3.40.50.150">
    <property type="entry name" value="Vaccinia Virus protein VP39"/>
    <property type="match status" value="1"/>
</dbReference>
<dbReference type="HAMAP" id="MF_00607">
    <property type="entry name" value="16SrRNA_methyltr_A"/>
    <property type="match status" value="1"/>
</dbReference>
<dbReference type="InterPro" id="IPR001737">
    <property type="entry name" value="KsgA/Erm"/>
</dbReference>
<dbReference type="InterPro" id="IPR023165">
    <property type="entry name" value="rRNA_Ade_diMease-like_C"/>
</dbReference>
<dbReference type="InterPro" id="IPR020596">
    <property type="entry name" value="rRNA_Ade_Mease_Trfase_CS"/>
</dbReference>
<dbReference type="InterPro" id="IPR020598">
    <property type="entry name" value="rRNA_Ade_methylase_Trfase_N"/>
</dbReference>
<dbReference type="InterPro" id="IPR011530">
    <property type="entry name" value="rRNA_adenine_dimethylase"/>
</dbReference>
<dbReference type="InterPro" id="IPR029063">
    <property type="entry name" value="SAM-dependent_MTases_sf"/>
</dbReference>
<dbReference type="NCBIfam" id="TIGR00755">
    <property type="entry name" value="ksgA"/>
    <property type="match status" value="1"/>
</dbReference>
<dbReference type="PANTHER" id="PTHR11727">
    <property type="entry name" value="DIMETHYLADENOSINE TRANSFERASE"/>
    <property type="match status" value="1"/>
</dbReference>
<dbReference type="PANTHER" id="PTHR11727:SF7">
    <property type="entry name" value="DIMETHYLADENOSINE TRANSFERASE-RELATED"/>
    <property type="match status" value="1"/>
</dbReference>
<dbReference type="Pfam" id="PF00398">
    <property type="entry name" value="RrnaAD"/>
    <property type="match status" value="1"/>
</dbReference>
<dbReference type="SMART" id="SM00650">
    <property type="entry name" value="rADc"/>
    <property type="match status" value="1"/>
</dbReference>
<dbReference type="SUPFAM" id="SSF53335">
    <property type="entry name" value="S-adenosyl-L-methionine-dependent methyltransferases"/>
    <property type="match status" value="1"/>
</dbReference>
<dbReference type="PROSITE" id="PS01131">
    <property type="entry name" value="RRNA_A_DIMETH"/>
    <property type="match status" value="1"/>
</dbReference>
<dbReference type="PROSITE" id="PS51689">
    <property type="entry name" value="SAM_RNA_A_N6_MT"/>
    <property type="match status" value="1"/>
</dbReference>
<evidence type="ECO:0000255" key="1">
    <source>
        <dbReference type="HAMAP-Rule" id="MF_00607"/>
    </source>
</evidence>
<gene>
    <name evidence="1" type="primary">rsmA</name>
    <name evidence="1" type="synonym">ksgA</name>
    <name type="ordered locus">LPC_3233</name>
</gene>
<sequence length="256" mass="28952">MRHSPRKRFGQNFLQDKYIINEILRAINPLADDNMLEIGPGLGALTQPLLQKLNRLTAIEIDTDLQNYLTRLPVSQGKLNLIPADALTVDFCQFGPHLRVVGNLPYNISTPLLIYLLKFITCIDDMHFMLQKEVVERIAATHGTKAYGRLSVMLQYHCEVEYLFDVPPEAFEPKPKVDSAIVRLTPYRVSPFESVNTEKLENIVAKAFAMRRKTLTNNLKGIISLSQLNDLGIDGGKRPEQISVAEYVQLAKFISN</sequence>
<comment type="function">
    <text evidence="1">Specifically dimethylates two adjacent adenosines (A1518 and A1519) in the loop of a conserved hairpin near the 3'-end of 16S rRNA in the 30S particle. May play a critical role in biogenesis of 30S subunits.</text>
</comment>
<comment type="catalytic activity">
    <reaction evidence="1">
        <text>adenosine(1518)/adenosine(1519) in 16S rRNA + 4 S-adenosyl-L-methionine = N(6)-dimethyladenosine(1518)/N(6)-dimethyladenosine(1519) in 16S rRNA + 4 S-adenosyl-L-homocysteine + 4 H(+)</text>
        <dbReference type="Rhea" id="RHEA:19609"/>
        <dbReference type="Rhea" id="RHEA-COMP:10232"/>
        <dbReference type="Rhea" id="RHEA-COMP:10233"/>
        <dbReference type="ChEBI" id="CHEBI:15378"/>
        <dbReference type="ChEBI" id="CHEBI:57856"/>
        <dbReference type="ChEBI" id="CHEBI:59789"/>
        <dbReference type="ChEBI" id="CHEBI:74411"/>
        <dbReference type="ChEBI" id="CHEBI:74493"/>
        <dbReference type="EC" id="2.1.1.182"/>
    </reaction>
</comment>
<comment type="subcellular location">
    <subcellularLocation>
        <location evidence="1">Cytoplasm</location>
    </subcellularLocation>
</comment>
<comment type="similarity">
    <text evidence="1">Belongs to the class I-like SAM-binding methyltransferase superfamily. rRNA adenine N(6)-methyltransferase family. RsmA subfamily.</text>
</comment>
<reference key="1">
    <citation type="submission" date="2006-11" db="EMBL/GenBank/DDBJ databases">
        <title>Identification and characterization of a new conjugation/ type IVA secretion system (trb/tra) of L. pneumophila Corby localized on a mobile genomic island.</title>
        <authorList>
            <person name="Gloeckner G."/>
            <person name="Albert-Weissenberger C."/>
            <person name="Weinmann E."/>
            <person name="Jacobi S."/>
            <person name="Schunder E."/>
            <person name="Steinert M."/>
            <person name="Buchrieser C."/>
            <person name="Hacker J."/>
            <person name="Heuner K."/>
        </authorList>
    </citation>
    <scope>NUCLEOTIDE SEQUENCE [LARGE SCALE GENOMIC DNA]</scope>
    <source>
        <strain>Corby</strain>
    </source>
</reference>
<proteinExistence type="inferred from homology"/>
<protein>
    <recommendedName>
        <fullName evidence="1">Ribosomal RNA small subunit methyltransferase A</fullName>
        <ecNumber evidence="1">2.1.1.182</ecNumber>
    </recommendedName>
    <alternativeName>
        <fullName evidence="1">16S rRNA (adenine(1518)-N(6)/adenine(1519)-N(6))-dimethyltransferase</fullName>
    </alternativeName>
    <alternativeName>
        <fullName evidence="1">16S rRNA dimethyladenosine transferase</fullName>
    </alternativeName>
    <alternativeName>
        <fullName evidence="1">16S rRNA dimethylase</fullName>
    </alternativeName>
    <alternativeName>
        <fullName evidence="1">S-adenosylmethionine-6-N', N'-adenosyl(rRNA) dimethyltransferase</fullName>
    </alternativeName>
</protein>
<accession>A5IIC0</accession>
<organism>
    <name type="scientific">Legionella pneumophila (strain Corby)</name>
    <dbReference type="NCBI Taxonomy" id="400673"/>
    <lineage>
        <taxon>Bacteria</taxon>
        <taxon>Pseudomonadati</taxon>
        <taxon>Pseudomonadota</taxon>
        <taxon>Gammaproteobacteria</taxon>
        <taxon>Legionellales</taxon>
        <taxon>Legionellaceae</taxon>
        <taxon>Legionella</taxon>
    </lineage>
</organism>